<evidence type="ECO:0000250" key="1">
    <source>
        <dbReference type="UniProtKB" id="P03705"/>
    </source>
</evidence>
<evidence type="ECO:0000255" key="2"/>
<evidence type="ECO:0000256" key="3">
    <source>
        <dbReference type="SAM" id="MobiDB-lite"/>
    </source>
</evidence>
<evidence type="ECO:0000269" key="4">
    <source>
    </source>
</evidence>
<evidence type="ECO:0000269" key="5">
    <source>
    </source>
</evidence>
<evidence type="ECO:0000305" key="6"/>
<organism>
    <name type="scientific">Enterobacteria phage PRD1</name>
    <name type="common">Bacteriophage PRD1</name>
    <dbReference type="NCBI Taxonomy" id="10658"/>
    <lineage>
        <taxon>Viruses</taxon>
        <taxon>Varidnaviria</taxon>
        <taxon>Bamfordvirae</taxon>
        <taxon>Preplasmiviricota</taxon>
        <taxon>Tectiliviricetes</taxon>
        <taxon>Kalamavirales</taxon>
        <taxon>Tectiviridae</taxon>
        <taxon>Alphatectivirus</taxon>
        <taxon>Alphatectivirus PRD1</taxon>
    </lineage>
</organism>
<sequence>MMENDEWWKYLIFPLVATLGGIVNYSKRALAMKRFSKLEFAVEAVSAAFVGLMVTLGGAAMDLSPHWLGMAAGMSGWMGADFVKAVFSQFVQSKIAPINQPGPIDSDNDKPGRTFND</sequence>
<dbReference type="EMBL" id="AY848689">
    <property type="protein sequence ID" value="AAX45922.1"/>
    <property type="molecule type" value="Genomic_DNA"/>
</dbReference>
<dbReference type="RefSeq" id="YP_001542615.1">
    <property type="nucleotide sequence ID" value="NC_001421.2"/>
</dbReference>
<dbReference type="RefSeq" id="YP_009639981.1">
    <property type="nucleotide sequence ID" value="NC_001421.2"/>
</dbReference>
<dbReference type="SMR" id="Q3T4L9"/>
<dbReference type="TCDB" id="1.E.5.1.1">
    <property type="family name" value="the prd1 phage p35 holin (p35 holin) family"/>
</dbReference>
<dbReference type="GeneID" id="5729504"/>
<dbReference type="OrthoDB" id="33050at10239"/>
<dbReference type="Proteomes" id="UP000002143">
    <property type="component" value="Segment"/>
</dbReference>
<dbReference type="GO" id="GO:0020002">
    <property type="term" value="C:host cell plasma membrane"/>
    <property type="evidence" value="ECO:0007669"/>
    <property type="project" value="UniProtKB-SubCell"/>
</dbReference>
<dbReference type="GO" id="GO:0016020">
    <property type="term" value="C:membrane"/>
    <property type="evidence" value="ECO:0007669"/>
    <property type="project" value="UniProtKB-KW"/>
</dbReference>
<dbReference type="GO" id="GO:0003824">
    <property type="term" value="F:catalytic activity"/>
    <property type="evidence" value="ECO:0007669"/>
    <property type="project" value="UniProtKB-KW"/>
</dbReference>
<dbReference type="GO" id="GO:0042742">
    <property type="term" value="P:defense response to bacterium"/>
    <property type="evidence" value="ECO:0007669"/>
    <property type="project" value="UniProtKB-KW"/>
</dbReference>
<dbReference type="GO" id="GO:0044659">
    <property type="term" value="P:viral release from host cell by cytolysis"/>
    <property type="evidence" value="ECO:0000314"/>
    <property type="project" value="CACAO"/>
</dbReference>
<dbReference type="InterPro" id="IPR032126">
    <property type="entry name" value="LydA_holin"/>
</dbReference>
<dbReference type="Pfam" id="PF16083">
    <property type="entry name" value="Phage_holin_3_3"/>
    <property type="match status" value="1"/>
</dbReference>
<keyword id="KW-0929">Antimicrobial</keyword>
<keyword id="KW-0081">Bacteriolytic enzyme</keyword>
<keyword id="KW-0204">Cytolysis</keyword>
<keyword id="KW-1030">Host cell inner membrane</keyword>
<keyword id="KW-0578">Host cell lysis by virus</keyword>
<keyword id="KW-1032">Host cell membrane</keyword>
<keyword id="KW-1043">Host membrane</keyword>
<keyword id="KW-0472">Membrane</keyword>
<keyword id="KW-1185">Reference proteome</keyword>
<keyword id="KW-0812">Transmembrane</keyword>
<keyword id="KW-1133">Transmembrane helix</keyword>
<keyword id="KW-1188">Viral release from host cell</keyword>
<gene>
    <name type="primary">XXXV</name>
</gene>
<reference key="1">
    <citation type="journal article" date="1991" name="Virology">
        <title>Genome organization of membrane-containing bacteriophage PRD1.</title>
        <authorList>
            <person name="Bamford J.K.H."/>
            <person name="Haenninen A.-L."/>
            <person name="Pakula T.M."/>
            <person name="Ojala P.M."/>
            <person name="Kalkkinen N."/>
            <person name="Frilander M."/>
            <person name="Bamford D.H."/>
        </authorList>
    </citation>
    <scope>NUCLEOTIDE SEQUENCE [GENOMIC DNA]</scope>
</reference>
<reference key="2">
    <citation type="journal article" date="2005" name="J. Mol. Biol.">
        <title>A snapshot of viral evolution from genome analysis of the tectiviridae family.</title>
        <authorList>
            <person name="Saren A.M."/>
            <person name="Ravantti J.J."/>
            <person name="Benson S.D."/>
            <person name="Burnett R.M."/>
            <person name="Paulin L."/>
            <person name="Bamford D.H."/>
            <person name="Bamford J.K.H."/>
        </authorList>
    </citation>
    <scope>NUCLEOTIDE SEQUENCE [GENOMIC DNA]</scope>
</reference>
<reference key="3">
    <citation type="journal article" date="2003" name="J. Bacteriol.">
        <title>Identification and mutational analysis of bacteriophage PRD1 holin protein P35.</title>
        <authorList>
            <person name="Rydman P.S."/>
            <person name="Bamford D.H."/>
        </authorList>
    </citation>
    <scope>FUNCTION</scope>
    <scope>MUTAGENESIS</scope>
</reference>
<reference key="4">
    <citation type="journal article" date="2005" name="J. Bacteriol.">
        <title>The holin protein of bacteriophage PRD1 forms a pore for small-molecule and endolysin translocation.</title>
        <authorList>
            <person name="Ziedaite G."/>
            <person name="Daugelavicius R."/>
            <person name="Bamford J.K.H."/>
            <person name="Bamford D.H."/>
        </authorList>
    </citation>
    <scope>FUNCTION</scope>
</reference>
<comment type="function">
    <text evidence="1 4 5">Isoform Holin: Accumulates harmlessly in the cytoplasmic membrane until it reaches a critical concentration that triggers the formation of micron-scale pores (holes) causing host cell membrane disruption and endolysin escape into the periplasmic space (PubMed:12813073, PubMed:16030234). Determines the precise timing of host cell lysis (By similarity). Participates with the endolysin and spanin proteins in the sequential events which lead to the programmed host cell lysis releasing the mature viral particles from the host cell (By similarity).</text>
</comment>
<comment type="function">
    <text evidence="1">Isoform Antiholin: Counteracts the aggregation of the holin molecules and thus of pore formation.</text>
</comment>
<comment type="subunit">
    <text evidence="1">Homomultimer. Isoform Holin: Interacts with isoform Antiholin; this interaction blocks the holin homomultimerization and delays host cell lysis.</text>
</comment>
<comment type="subcellular location">
    <subcellularLocation>
        <location evidence="1">Host cell inner membrane</location>
        <topology evidence="1">Multi-pass membrane protein</topology>
    </subcellularLocation>
    <text evidence="6">Classified as a class I holin.</text>
</comment>
<name>HOLIN_BPPRD</name>
<protein>
    <recommendedName>
        <fullName>Holin</fullName>
    </recommendedName>
    <alternativeName>
        <fullName>Protein P35</fullName>
    </alternativeName>
</protein>
<accession>Q3T4L9</accession>
<proteinExistence type="inferred from homology"/>
<feature type="chain" id="PRO_0000234092" description="Holin">
    <location>
        <begin position="1"/>
        <end position="117"/>
    </location>
</feature>
<feature type="transmembrane region" description="Helical" evidence="2">
    <location>
        <begin position="6"/>
        <end position="26"/>
    </location>
</feature>
<feature type="transmembrane region" description="Helical" evidence="2">
    <location>
        <begin position="40"/>
        <end position="60"/>
    </location>
</feature>
<feature type="transmembrane region" description="Helical" evidence="2">
    <location>
        <begin position="67"/>
        <end position="87"/>
    </location>
</feature>
<feature type="region of interest" description="Disordered" evidence="3">
    <location>
        <begin position="97"/>
        <end position="117"/>
    </location>
</feature>
<feature type="compositionally biased region" description="Basic and acidic residues" evidence="3">
    <location>
        <begin position="107"/>
        <end position="117"/>
    </location>
</feature>
<organismHost>
    <name type="scientific">Acinetobacter calcoaceticus</name>
    <dbReference type="NCBI Taxonomy" id="471"/>
</organismHost>
<organismHost>
    <name type="scientific">Escherichia coli</name>
    <dbReference type="NCBI Taxonomy" id="562"/>
</organismHost>
<organismHost>
    <name type="scientific">Proteus mirabilis</name>
    <dbReference type="NCBI Taxonomy" id="584"/>
</organismHost>
<organismHost>
    <name type="scientific">Pseudomonas aeruginosa</name>
    <dbReference type="NCBI Taxonomy" id="287"/>
</organismHost>
<organismHost>
    <name type="scientific">Pseudomonas fluorescens</name>
    <dbReference type="NCBI Taxonomy" id="294"/>
</organismHost>
<organismHost>
    <name type="scientific">Pseudomonas putida</name>
    <name type="common">Arthrobacter siderocapsulatus</name>
    <dbReference type="NCBI Taxonomy" id="303"/>
</organismHost>
<organismHost>
    <name type="scientific">Salmonella typhimurium</name>
    <dbReference type="NCBI Taxonomy" id="90371"/>
</organismHost>
<organismHost>
    <name type="scientific">Vibrio cholerae</name>
    <dbReference type="NCBI Taxonomy" id="666"/>
</organismHost>